<feature type="chain" id="PRO_0000284258" description="Endoribonuclease YbeY">
    <location>
        <begin position="1"/>
        <end position="141"/>
    </location>
</feature>
<feature type="binding site" evidence="1">
    <location>
        <position position="101"/>
    </location>
    <ligand>
        <name>Zn(2+)</name>
        <dbReference type="ChEBI" id="CHEBI:29105"/>
        <note>catalytic</note>
    </ligand>
</feature>
<feature type="binding site" evidence="1">
    <location>
        <position position="105"/>
    </location>
    <ligand>
        <name>Zn(2+)</name>
        <dbReference type="ChEBI" id="CHEBI:29105"/>
        <note>catalytic</note>
    </ligand>
</feature>
<feature type="binding site" evidence="1">
    <location>
        <position position="111"/>
    </location>
    <ligand>
        <name>Zn(2+)</name>
        <dbReference type="ChEBI" id="CHEBI:29105"/>
        <note>catalytic</note>
    </ligand>
</feature>
<reference key="1">
    <citation type="journal article" date="2007" name="Environ. Microbiol.">
        <title>Whole-genome analysis of the ammonia-oxidizing bacterium, Nitrosomonas eutropha C91: implications for niche adaptation.</title>
        <authorList>
            <person name="Stein L.Y."/>
            <person name="Arp D.J."/>
            <person name="Berube P.M."/>
            <person name="Chain P.S."/>
            <person name="Hauser L."/>
            <person name="Jetten M.S."/>
            <person name="Klotz M.G."/>
            <person name="Larimer F.W."/>
            <person name="Norton J.M."/>
            <person name="Op den Camp H.J.M."/>
            <person name="Shin M."/>
            <person name="Wei X."/>
        </authorList>
    </citation>
    <scope>NUCLEOTIDE SEQUENCE [LARGE SCALE GENOMIC DNA]</scope>
    <source>
        <strain>DSM 101675 / C91 / Nm57</strain>
    </source>
</reference>
<name>YBEY_NITEC</name>
<protein>
    <recommendedName>
        <fullName evidence="1">Endoribonuclease YbeY</fullName>
        <ecNumber evidence="1">3.1.-.-</ecNumber>
    </recommendedName>
</protein>
<evidence type="ECO:0000255" key="1">
    <source>
        <dbReference type="HAMAP-Rule" id="MF_00009"/>
    </source>
</evidence>
<gene>
    <name evidence="1" type="primary">ybeY</name>
    <name type="ordered locus">Neut_1787</name>
</gene>
<accession>Q0AF61</accession>
<dbReference type="EC" id="3.1.-.-" evidence="1"/>
<dbReference type="EMBL" id="CP000450">
    <property type="protein sequence ID" value="ABI60021.1"/>
    <property type="molecule type" value="Genomic_DNA"/>
</dbReference>
<dbReference type="SMR" id="Q0AF61"/>
<dbReference type="STRING" id="335283.Neut_1787"/>
<dbReference type="KEGG" id="net:Neut_1787"/>
<dbReference type="eggNOG" id="COG0319">
    <property type="taxonomic scope" value="Bacteria"/>
</dbReference>
<dbReference type="HOGENOM" id="CLU_106710_0_1_4"/>
<dbReference type="OrthoDB" id="9807740at2"/>
<dbReference type="Proteomes" id="UP000001966">
    <property type="component" value="Chromosome"/>
</dbReference>
<dbReference type="GO" id="GO:0005737">
    <property type="term" value="C:cytoplasm"/>
    <property type="evidence" value="ECO:0007669"/>
    <property type="project" value="UniProtKB-SubCell"/>
</dbReference>
<dbReference type="GO" id="GO:0004222">
    <property type="term" value="F:metalloendopeptidase activity"/>
    <property type="evidence" value="ECO:0007669"/>
    <property type="project" value="InterPro"/>
</dbReference>
<dbReference type="GO" id="GO:0004521">
    <property type="term" value="F:RNA endonuclease activity"/>
    <property type="evidence" value="ECO:0007669"/>
    <property type="project" value="UniProtKB-UniRule"/>
</dbReference>
<dbReference type="GO" id="GO:0008270">
    <property type="term" value="F:zinc ion binding"/>
    <property type="evidence" value="ECO:0007669"/>
    <property type="project" value="UniProtKB-UniRule"/>
</dbReference>
<dbReference type="GO" id="GO:0006364">
    <property type="term" value="P:rRNA processing"/>
    <property type="evidence" value="ECO:0007669"/>
    <property type="project" value="UniProtKB-UniRule"/>
</dbReference>
<dbReference type="Gene3D" id="3.40.390.30">
    <property type="entry name" value="Metalloproteases ('zincins'), catalytic domain"/>
    <property type="match status" value="1"/>
</dbReference>
<dbReference type="HAMAP" id="MF_00009">
    <property type="entry name" value="Endoribonucl_YbeY"/>
    <property type="match status" value="1"/>
</dbReference>
<dbReference type="InterPro" id="IPR023091">
    <property type="entry name" value="MetalPrtase_cat_dom_sf_prd"/>
</dbReference>
<dbReference type="InterPro" id="IPR002036">
    <property type="entry name" value="YbeY"/>
</dbReference>
<dbReference type="InterPro" id="IPR020549">
    <property type="entry name" value="YbeY_CS"/>
</dbReference>
<dbReference type="NCBIfam" id="TIGR00043">
    <property type="entry name" value="rRNA maturation RNase YbeY"/>
    <property type="match status" value="1"/>
</dbReference>
<dbReference type="PANTHER" id="PTHR46986">
    <property type="entry name" value="ENDORIBONUCLEASE YBEY, CHLOROPLASTIC"/>
    <property type="match status" value="1"/>
</dbReference>
<dbReference type="PANTHER" id="PTHR46986:SF1">
    <property type="entry name" value="ENDORIBONUCLEASE YBEY, CHLOROPLASTIC"/>
    <property type="match status" value="1"/>
</dbReference>
<dbReference type="Pfam" id="PF02130">
    <property type="entry name" value="YbeY"/>
    <property type="match status" value="1"/>
</dbReference>
<dbReference type="SUPFAM" id="SSF55486">
    <property type="entry name" value="Metalloproteases ('zincins'), catalytic domain"/>
    <property type="match status" value="1"/>
</dbReference>
<dbReference type="PROSITE" id="PS01306">
    <property type="entry name" value="UPF0054"/>
    <property type="match status" value="1"/>
</dbReference>
<comment type="function">
    <text evidence="1">Single strand-specific metallo-endoribonuclease involved in late-stage 70S ribosome quality control and in maturation of the 3' terminus of the 16S rRNA.</text>
</comment>
<comment type="cofactor">
    <cofactor evidence="1">
        <name>Zn(2+)</name>
        <dbReference type="ChEBI" id="CHEBI:29105"/>
    </cofactor>
    <text evidence="1">Binds 1 zinc ion.</text>
</comment>
<comment type="subcellular location">
    <subcellularLocation>
        <location evidence="1">Cytoplasm</location>
    </subcellularLocation>
</comment>
<comment type="similarity">
    <text evidence="1">Belongs to the endoribonuclease YbeY family.</text>
</comment>
<keyword id="KW-0963">Cytoplasm</keyword>
<keyword id="KW-0255">Endonuclease</keyword>
<keyword id="KW-0378">Hydrolase</keyword>
<keyword id="KW-0479">Metal-binding</keyword>
<keyword id="KW-0540">Nuclease</keyword>
<keyword id="KW-0690">Ribosome biogenesis</keyword>
<keyword id="KW-0698">rRNA processing</keyword>
<keyword id="KW-0862">Zinc</keyword>
<proteinExistence type="inferred from homology"/>
<sequence length="141" mass="15840">MTVQFAADKTNIPGRQLFRKWVGAALNKPAEIVIRIVGMQEGEVLNRKFRGKDSATNVLTFVYSDDVPLLGDIVLCAPVISREAEQQNKDLVAHYAHLIVHGVLHLQGYDHISDEDAVVMESLETKIITRLNYPDPYVIQQ</sequence>
<organism>
    <name type="scientific">Nitrosomonas eutropha (strain DSM 101675 / C91 / Nm57)</name>
    <dbReference type="NCBI Taxonomy" id="335283"/>
    <lineage>
        <taxon>Bacteria</taxon>
        <taxon>Pseudomonadati</taxon>
        <taxon>Pseudomonadota</taxon>
        <taxon>Betaproteobacteria</taxon>
        <taxon>Nitrosomonadales</taxon>
        <taxon>Nitrosomonadaceae</taxon>
        <taxon>Nitrosomonas</taxon>
    </lineage>
</organism>